<name>DNAJ_CAMLR</name>
<protein>
    <recommendedName>
        <fullName evidence="1">Chaperone protein DnaJ</fullName>
    </recommendedName>
</protein>
<feature type="chain" id="PRO_1000164248" description="Chaperone protein DnaJ">
    <location>
        <begin position="1"/>
        <end position="373"/>
    </location>
</feature>
<feature type="domain" description="J" evidence="1">
    <location>
        <begin position="4"/>
        <end position="69"/>
    </location>
</feature>
<feature type="repeat" description="CXXCXGXG motif">
    <location>
        <begin position="146"/>
        <end position="153"/>
    </location>
</feature>
<feature type="repeat" description="CXXCXGXG motif">
    <location>
        <begin position="162"/>
        <end position="169"/>
    </location>
</feature>
<feature type="repeat" description="CXXCXGXG motif">
    <location>
        <begin position="184"/>
        <end position="191"/>
    </location>
</feature>
<feature type="repeat" description="CXXCXGXG motif">
    <location>
        <begin position="198"/>
        <end position="205"/>
    </location>
</feature>
<feature type="zinc finger region" description="CR-type" evidence="1">
    <location>
        <begin position="133"/>
        <end position="210"/>
    </location>
</feature>
<feature type="binding site" evidence="1">
    <location>
        <position position="146"/>
    </location>
    <ligand>
        <name>Zn(2+)</name>
        <dbReference type="ChEBI" id="CHEBI:29105"/>
        <label>1</label>
    </ligand>
</feature>
<feature type="binding site" evidence="1">
    <location>
        <position position="149"/>
    </location>
    <ligand>
        <name>Zn(2+)</name>
        <dbReference type="ChEBI" id="CHEBI:29105"/>
        <label>1</label>
    </ligand>
</feature>
<feature type="binding site" evidence="1">
    <location>
        <position position="162"/>
    </location>
    <ligand>
        <name>Zn(2+)</name>
        <dbReference type="ChEBI" id="CHEBI:29105"/>
        <label>2</label>
    </ligand>
</feature>
<feature type="binding site" evidence="1">
    <location>
        <position position="165"/>
    </location>
    <ligand>
        <name>Zn(2+)</name>
        <dbReference type="ChEBI" id="CHEBI:29105"/>
        <label>2</label>
    </ligand>
</feature>
<feature type="binding site" evidence="1">
    <location>
        <position position="184"/>
    </location>
    <ligand>
        <name>Zn(2+)</name>
        <dbReference type="ChEBI" id="CHEBI:29105"/>
        <label>2</label>
    </ligand>
</feature>
<feature type="binding site" evidence="1">
    <location>
        <position position="187"/>
    </location>
    <ligand>
        <name>Zn(2+)</name>
        <dbReference type="ChEBI" id="CHEBI:29105"/>
        <label>2</label>
    </ligand>
</feature>
<feature type="binding site" evidence="1">
    <location>
        <position position="198"/>
    </location>
    <ligand>
        <name>Zn(2+)</name>
        <dbReference type="ChEBI" id="CHEBI:29105"/>
        <label>1</label>
    </ligand>
</feature>
<feature type="binding site" evidence="1">
    <location>
        <position position="201"/>
    </location>
    <ligand>
        <name>Zn(2+)</name>
        <dbReference type="ChEBI" id="CHEBI:29105"/>
        <label>1</label>
    </ligand>
</feature>
<comment type="function">
    <text evidence="1">Participates actively in the response to hyperosmotic and heat shock by preventing the aggregation of stress-denatured proteins and by disaggregating proteins, also in an autonomous, DnaK-independent fashion. Unfolded proteins bind initially to DnaJ; upon interaction with the DnaJ-bound protein, DnaK hydrolyzes its bound ATP, resulting in the formation of a stable complex. GrpE releases ADP from DnaK; ATP binding to DnaK triggers the release of the substrate protein, thus completing the reaction cycle. Several rounds of ATP-dependent interactions between DnaJ, DnaK and GrpE are required for fully efficient folding. Also involved, together with DnaK and GrpE, in the DNA replication of plasmids through activation of initiation proteins.</text>
</comment>
<comment type="cofactor">
    <cofactor evidence="1">
        <name>Zn(2+)</name>
        <dbReference type="ChEBI" id="CHEBI:29105"/>
    </cofactor>
    <text evidence="1">Binds 2 Zn(2+) ions per monomer.</text>
</comment>
<comment type="subunit">
    <text evidence="1">Homodimer.</text>
</comment>
<comment type="subcellular location">
    <subcellularLocation>
        <location evidence="1">Cytoplasm</location>
    </subcellularLocation>
</comment>
<comment type="domain">
    <text evidence="1">The J domain is necessary and sufficient to stimulate DnaK ATPase activity. Zinc center 1 plays an important role in the autonomous, DnaK-independent chaperone activity of DnaJ. Zinc center 2 is essential for interaction with DnaK and for DnaJ activity.</text>
</comment>
<comment type="similarity">
    <text evidence="1">Belongs to the DnaJ family.</text>
</comment>
<proteinExistence type="inferred from homology"/>
<reference key="1">
    <citation type="journal article" date="2008" name="Foodborne Pathog. Dis.">
        <title>The complete genome sequence and analysis of the human pathogen Campylobacter lari.</title>
        <authorList>
            <person name="Miller W.G."/>
            <person name="Wang G."/>
            <person name="Binnewies T.T."/>
            <person name="Parker C.T."/>
        </authorList>
    </citation>
    <scope>NUCLEOTIDE SEQUENCE [LARGE SCALE GENOMIC DNA]</scope>
    <source>
        <strain>RM2100 / D67 / ATCC BAA-1060</strain>
    </source>
</reference>
<keyword id="KW-0143">Chaperone</keyword>
<keyword id="KW-0963">Cytoplasm</keyword>
<keyword id="KW-0235">DNA replication</keyword>
<keyword id="KW-0479">Metal-binding</keyword>
<keyword id="KW-1185">Reference proteome</keyword>
<keyword id="KW-0677">Repeat</keyword>
<keyword id="KW-0346">Stress response</keyword>
<keyword id="KW-0862">Zinc</keyword>
<keyword id="KW-0863">Zinc-finger</keyword>
<accession>B9KFK6</accession>
<gene>
    <name evidence="1" type="primary">dnaJ</name>
    <name type="ordered locus">Cla_0493</name>
</gene>
<sequence>MELNYYEILEISQTSDKETIKKAYRKMALKYHPDRNQGDKEAEEKFKLVNEAYEVLSNDEKRSIYDRYGKEGLKGQAGGFGGFGDVDLGDIFSSFFGDGFGFGSSTRKKEKGNKYPQDLKITTKISFKEAVFGCKKKIDFSYKSFCKSCKGSGSENGKLDTCPHCGGKGQVGVRQGFMTFVQSCDHCKGSGQIIKDKCKTCHGNGYEEIKDHIELDIPEGIDSGMSLRVQNKANELPNSSQRGDLYIKIIVEDDDKFIRHDDDIYTIVPVFFTQAALGKTIKVSTIRGEADLKLPVGAKDKQKFELTNEGVKNIHNGKLGSHIVQIEIKFPKNLTDEQKNLLLQLEKSFGLADEEAFIEQESLFDKIKSWFSH</sequence>
<evidence type="ECO:0000255" key="1">
    <source>
        <dbReference type="HAMAP-Rule" id="MF_01152"/>
    </source>
</evidence>
<organism>
    <name type="scientific">Campylobacter lari (strain RM2100 / D67 / ATCC BAA-1060)</name>
    <dbReference type="NCBI Taxonomy" id="306263"/>
    <lineage>
        <taxon>Bacteria</taxon>
        <taxon>Pseudomonadati</taxon>
        <taxon>Campylobacterota</taxon>
        <taxon>Epsilonproteobacteria</taxon>
        <taxon>Campylobacterales</taxon>
        <taxon>Campylobacteraceae</taxon>
        <taxon>Campylobacter</taxon>
    </lineage>
</organism>
<dbReference type="EMBL" id="CP000932">
    <property type="protein sequence ID" value="ACM63841.1"/>
    <property type="molecule type" value="Genomic_DNA"/>
</dbReference>
<dbReference type="RefSeq" id="WP_012661224.1">
    <property type="nucleotide sequence ID" value="NC_012039.1"/>
</dbReference>
<dbReference type="SMR" id="B9KFK6"/>
<dbReference type="STRING" id="306263.Cla_0493"/>
<dbReference type="KEGG" id="cla:CLA_0493"/>
<dbReference type="PATRIC" id="fig|306263.5.peg.488"/>
<dbReference type="eggNOG" id="COG0484">
    <property type="taxonomic scope" value="Bacteria"/>
</dbReference>
<dbReference type="HOGENOM" id="CLU_017633_0_7_7"/>
<dbReference type="Proteomes" id="UP000007727">
    <property type="component" value="Chromosome"/>
</dbReference>
<dbReference type="GO" id="GO:0005737">
    <property type="term" value="C:cytoplasm"/>
    <property type="evidence" value="ECO:0007669"/>
    <property type="project" value="UniProtKB-SubCell"/>
</dbReference>
<dbReference type="GO" id="GO:0005524">
    <property type="term" value="F:ATP binding"/>
    <property type="evidence" value="ECO:0007669"/>
    <property type="project" value="InterPro"/>
</dbReference>
<dbReference type="GO" id="GO:0031072">
    <property type="term" value="F:heat shock protein binding"/>
    <property type="evidence" value="ECO:0007669"/>
    <property type="project" value="InterPro"/>
</dbReference>
<dbReference type="GO" id="GO:0051082">
    <property type="term" value="F:unfolded protein binding"/>
    <property type="evidence" value="ECO:0007669"/>
    <property type="project" value="UniProtKB-UniRule"/>
</dbReference>
<dbReference type="GO" id="GO:0008270">
    <property type="term" value="F:zinc ion binding"/>
    <property type="evidence" value="ECO:0007669"/>
    <property type="project" value="UniProtKB-UniRule"/>
</dbReference>
<dbReference type="GO" id="GO:0051085">
    <property type="term" value="P:chaperone cofactor-dependent protein refolding"/>
    <property type="evidence" value="ECO:0007669"/>
    <property type="project" value="TreeGrafter"/>
</dbReference>
<dbReference type="GO" id="GO:0006260">
    <property type="term" value="P:DNA replication"/>
    <property type="evidence" value="ECO:0007669"/>
    <property type="project" value="UniProtKB-KW"/>
</dbReference>
<dbReference type="GO" id="GO:0042026">
    <property type="term" value="P:protein refolding"/>
    <property type="evidence" value="ECO:0007669"/>
    <property type="project" value="TreeGrafter"/>
</dbReference>
<dbReference type="GO" id="GO:0009408">
    <property type="term" value="P:response to heat"/>
    <property type="evidence" value="ECO:0007669"/>
    <property type="project" value="InterPro"/>
</dbReference>
<dbReference type="CDD" id="cd06257">
    <property type="entry name" value="DnaJ"/>
    <property type="match status" value="1"/>
</dbReference>
<dbReference type="CDD" id="cd10747">
    <property type="entry name" value="DnaJ_C"/>
    <property type="match status" value="1"/>
</dbReference>
<dbReference type="CDD" id="cd10719">
    <property type="entry name" value="DnaJ_zf"/>
    <property type="match status" value="1"/>
</dbReference>
<dbReference type="FunFam" id="1.10.287.110:FF:000034">
    <property type="entry name" value="Chaperone protein DnaJ"/>
    <property type="match status" value="1"/>
</dbReference>
<dbReference type="FunFam" id="2.60.260.20:FF:000013">
    <property type="entry name" value="DnaJ subfamily B member 11"/>
    <property type="match status" value="1"/>
</dbReference>
<dbReference type="FunFam" id="2.10.230.10:FF:000002">
    <property type="entry name" value="Molecular chaperone DnaJ"/>
    <property type="match status" value="1"/>
</dbReference>
<dbReference type="Gene3D" id="1.10.287.110">
    <property type="entry name" value="DnaJ domain"/>
    <property type="match status" value="1"/>
</dbReference>
<dbReference type="Gene3D" id="2.10.230.10">
    <property type="entry name" value="Heat shock protein DnaJ, cysteine-rich domain"/>
    <property type="match status" value="1"/>
</dbReference>
<dbReference type="Gene3D" id="2.60.260.20">
    <property type="entry name" value="Urease metallochaperone UreE, N-terminal domain"/>
    <property type="match status" value="2"/>
</dbReference>
<dbReference type="HAMAP" id="MF_01152">
    <property type="entry name" value="DnaJ"/>
    <property type="match status" value="1"/>
</dbReference>
<dbReference type="InterPro" id="IPR012724">
    <property type="entry name" value="DnaJ"/>
</dbReference>
<dbReference type="InterPro" id="IPR002939">
    <property type="entry name" value="DnaJ_C"/>
</dbReference>
<dbReference type="InterPro" id="IPR001623">
    <property type="entry name" value="DnaJ_domain"/>
</dbReference>
<dbReference type="InterPro" id="IPR018253">
    <property type="entry name" value="DnaJ_domain_CS"/>
</dbReference>
<dbReference type="InterPro" id="IPR008971">
    <property type="entry name" value="HSP40/DnaJ_pept-bd"/>
</dbReference>
<dbReference type="InterPro" id="IPR001305">
    <property type="entry name" value="HSP_DnaJ_Cys-rich_dom"/>
</dbReference>
<dbReference type="InterPro" id="IPR036410">
    <property type="entry name" value="HSP_DnaJ_Cys-rich_dom_sf"/>
</dbReference>
<dbReference type="InterPro" id="IPR036869">
    <property type="entry name" value="J_dom_sf"/>
</dbReference>
<dbReference type="NCBIfam" id="TIGR02349">
    <property type="entry name" value="DnaJ_bact"/>
    <property type="match status" value="1"/>
</dbReference>
<dbReference type="NCBIfam" id="NF008035">
    <property type="entry name" value="PRK10767.1"/>
    <property type="match status" value="1"/>
</dbReference>
<dbReference type="PANTHER" id="PTHR43096:SF48">
    <property type="entry name" value="CHAPERONE PROTEIN DNAJ"/>
    <property type="match status" value="1"/>
</dbReference>
<dbReference type="PANTHER" id="PTHR43096">
    <property type="entry name" value="DNAJ HOMOLOG 1, MITOCHONDRIAL-RELATED"/>
    <property type="match status" value="1"/>
</dbReference>
<dbReference type="Pfam" id="PF00226">
    <property type="entry name" value="DnaJ"/>
    <property type="match status" value="1"/>
</dbReference>
<dbReference type="Pfam" id="PF01556">
    <property type="entry name" value="DnaJ_C"/>
    <property type="match status" value="1"/>
</dbReference>
<dbReference type="Pfam" id="PF00684">
    <property type="entry name" value="DnaJ_CXXCXGXG"/>
    <property type="match status" value="1"/>
</dbReference>
<dbReference type="PRINTS" id="PR00625">
    <property type="entry name" value="JDOMAIN"/>
</dbReference>
<dbReference type="SMART" id="SM00271">
    <property type="entry name" value="DnaJ"/>
    <property type="match status" value="1"/>
</dbReference>
<dbReference type="SUPFAM" id="SSF46565">
    <property type="entry name" value="Chaperone J-domain"/>
    <property type="match status" value="1"/>
</dbReference>
<dbReference type="SUPFAM" id="SSF57938">
    <property type="entry name" value="DnaJ/Hsp40 cysteine-rich domain"/>
    <property type="match status" value="1"/>
</dbReference>
<dbReference type="SUPFAM" id="SSF49493">
    <property type="entry name" value="HSP40/DnaJ peptide-binding domain"/>
    <property type="match status" value="2"/>
</dbReference>
<dbReference type="PROSITE" id="PS00636">
    <property type="entry name" value="DNAJ_1"/>
    <property type="match status" value="1"/>
</dbReference>
<dbReference type="PROSITE" id="PS50076">
    <property type="entry name" value="DNAJ_2"/>
    <property type="match status" value="1"/>
</dbReference>
<dbReference type="PROSITE" id="PS51188">
    <property type="entry name" value="ZF_CR"/>
    <property type="match status" value="1"/>
</dbReference>